<comment type="function">
    <text evidence="1">Receptor tyrosine kinase which binds promiscuously transmembrane ephrin-B family ligands residing on adjacent cells, leading to contact-dependent bidirectional signaling into neighboring cells. The signaling pathway downstream of the receptor is referred to as forward signaling while the signaling pathway downstream of the ephrin ligand is referred to as reverse signaling. Generally has an overlapping and redundant function with EPHB2. Like EPHB2, functions in axon guidance during development. In addition to its role in axon guidance also plays an important redundant role with other ephrin-B receptors in development and maturation of dendritic spines and the formation of excitatory synapses. May control other aspects of development through regulation of cell migration and positioning (By similarity).</text>
</comment>
<comment type="catalytic activity">
    <reaction evidence="7">
        <text>L-tyrosyl-[protein] + ATP = O-phospho-L-tyrosyl-[protein] + ADP + H(+)</text>
        <dbReference type="Rhea" id="RHEA:10596"/>
        <dbReference type="Rhea" id="RHEA-COMP:10136"/>
        <dbReference type="Rhea" id="RHEA-COMP:20101"/>
        <dbReference type="ChEBI" id="CHEBI:15378"/>
        <dbReference type="ChEBI" id="CHEBI:30616"/>
        <dbReference type="ChEBI" id="CHEBI:46858"/>
        <dbReference type="ChEBI" id="CHEBI:61978"/>
        <dbReference type="ChEBI" id="CHEBI:456216"/>
        <dbReference type="EC" id="2.7.10.1"/>
    </reaction>
</comment>
<comment type="subunit">
    <text evidence="1">Heterotetramer upon binding of the ligand. The heterotetramer is composed of an ephrin dimer and a receptor dimer. Oligomerization is probably required to induce biological responses (By similarity).</text>
</comment>
<comment type="subcellular location">
    <subcellularLocation>
        <location evidence="1">Cell membrane</location>
        <topology evidence="1">Single-pass type I membrane protein</topology>
    </subcellularLocation>
    <subcellularLocation>
        <location evidence="1">Cell projection</location>
        <location evidence="1">Dendrite</location>
    </subcellularLocation>
</comment>
<comment type="tissue specificity">
    <text>Expressed in the embryo in pre-somitic mesoderm, caudal somites, midbrain, and cement gland. Most abundant in adult brain, eye, heart, lung and ovary. Lower levels in intestine, kidney, oviduct and pharynx.</text>
</comment>
<comment type="developmental stage">
    <text>Expressed during early development.</text>
</comment>
<comment type="PTM">
    <text evidence="1">Phosphorylated. Autophosphorylates upon ligand-binding. Autophosphorylation on Tyr-590 is required for interaction with SH2 domain-containing proteins (By similarity).</text>
</comment>
<comment type="similarity">
    <text evidence="3">Belongs to the protein kinase superfamily. Tyr protein kinase family. Ephrin receptor subfamily.</text>
</comment>
<keyword id="KW-0067">ATP-binding</keyword>
<keyword id="KW-1003">Cell membrane</keyword>
<keyword id="KW-0966">Cell projection</keyword>
<keyword id="KW-0217">Developmental protein</keyword>
<keyword id="KW-1015">Disulfide bond</keyword>
<keyword id="KW-0325">Glycoprotein</keyword>
<keyword id="KW-0418">Kinase</keyword>
<keyword id="KW-0472">Membrane</keyword>
<keyword id="KW-0524">Neurogenesis</keyword>
<keyword id="KW-0547">Nucleotide-binding</keyword>
<keyword id="KW-0597">Phosphoprotein</keyword>
<keyword id="KW-0675">Receptor</keyword>
<keyword id="KW-1185">Reference proteome</keyword>
<keyword id="KW-0677">Repeat</keyword>
<keyword id="KW-0732">Signal</keyword>
<keyword id="KW-0808">Transferase</keyword>
<keyword id="KW-0812">Transmembrane</keyword>
<keyword id="KW-1133">Transmembrane helix</keyword>
<keyword id="KW-0829">Tyrosine-protein kinase</keyword>
<organism>
    <name type="scientific">Xenopus laevis</name>
    <name type="common">African clawed frog</name>
    <dbReference type="NCBI Taxonomy" id="8355"/>
    <lineage>
        <taxon>Eukaryota</taxon>
        <taxon>Metazoa</taxon>
        <taxon>Chordata</taxon>
        <taxon>Craniata</taxon>
        <taxon>Vertebrata</taxon>
        <taxon>Euteleostomi</taxon>
        <taxon>Amphibia</taxon>
        <taxon>Batrachia</taxon>
        <taxon>Anura</taxon>
        <taxon>Pipoidea</taxon>
        <taxon>Pipidae</taxon>
        <taxon>Xenopodinae</taxon>
        <taxon>Xenopus</taxon>
        <taxon>Xenopus</taxon>
    </lineage>
</organism>
<sequence length="974" mass="108264">MLPAVFVILALSAVQGLEETLMDTKWTTSELAWVAYPDSGWEEVSGYDEASNPIRTYQVCNVRDSNQNNWLRTQFIPRQDVQRVYVELKFTVRDCNSLPNLRGSCKETFNFFYYESDSDSASADSPFWMENPYIKVDTIAPDESFSRRDSGRVNTKIRSFGPISRAGFYLAFQDLGACVSLISVRVFFKKCPRTTAGFASFPETITGAEPTSLVIAPGTCVPNALEVSVPLKLYCNGDGDWMVPVGACTCAAGFEPAGKDTQCQACKRGTYKSKQGEGSCMPCPANSRAISSAATICSCQNGYYRADGESAETACTSVPSAPRQVISNVNETSVVLEWAEPGHLGGRDDVLYNVICKKCLERLCSRCDDNVQFWPRQLGVTQRLVSVSHLQAHTKYSFEIQAVNGVSGKSPHIPNYFTVNITTNQAAPSSVPMVQSHGSLANSLTLSWAPPESPNGIILDYEIKYYAKGHIGAGNTVTSQRTTVRMEGMTPDTVYVVQVRARTVAGYGAYSEPREFQTIAEDGDRSSLQEQVPMVVGSVTAGLIFIIAVVIIVIVCFSRKQRNDSESEYTEKLQQYMVPGMKLYIDPFTYEDPNEAVRDFAKEIDISCVKIEEVIGAGEFGEVCRGKLKQAGRREQFVAIKTLKAGYTEQQRRDFLGEASIMGQFDHPNIIRLEGVVTRSRPVMILTEFMENGALDSFLRMNDGQFTVIQLVGILRGIASGMKYLSEMNYVHRDLAARNILVNSNLVCKVSDFGLSRFLENSRSDPTYTSALGGKIPIRWTAPEAISYRKFTSASDVWSYGIVMWEVMSYGERPYWDMSNQDVINAIEQDYRLPPPMDCPSALHQLMLDCWLRDRNLRPKFSQIVSSLDKLIRNAASLKVTSPGQAGVSQQLLDRTVPDYTTFPTVSDWLEAIKMGQYQENFLSAGFTSFHLVAQMTAEDLLRIGVTLAGHQKKLLNSVQDMRLQMSQTLPVQV</sequence>
<accession>Q91735</accession>
<dbReference type="EC" id="2.7.10.1"/>
<dbReference type="EMBL" id="L43620">
    <property type="protein sequence ID" value="AAA93526.1"/>
    <property type="molecule type" value="mRNA"/>
</dbReference>
<dbReference type="RefSeq" id="NP_001081434.1">
    <property type="nucleotide sequence ID" value="NM_001087965.1"/>
</dbReference>
<dbReference type="SMR" id="Q91735"/>
<dbReference type="GlyCosmos" id="Q91735">
    <property type="glycosylation" value="2 sites, No reported glycans"/>
</dbReference>
<dbReference type="GeneID" id="397834"/>
<dbReference type="CTD" id="2049"/>
<dbReference type="BRENDA" id="2.7.10.1">
    <property type="organism ID" value="6725"/>
</dbReference>
<dbReference type="Proteomes" id="UP000186698">
    <property type="component" value="Unplaced"/>
</dbReference>
<dbReference type="GO" id="GO:0030425">
    <property type="term" value="C:dendrite"/>
    <property type="evidence" value="ECO:0000318"/>
    <property type="project" value="GO_Central"/>
</dbReference>
<dbReference type="GO" id="GO:0005886">
    <property type="term" value="C:plasma membrane"/>
    <property type="evidence" value="ECO:0000250"/>
    <property type="project" value="UniProtKB"/>
</dbReference>
<dbReference type="GO" id="GO:0005524">
    <property type="term" value="F:ATP binding"/>
    <property type="evidence" value="ECO:0007669"/>
    <property type="project" value="UniProtKB-KW"/>
</dbReference>
<dbReference type="GO" id="GO:0005003">
    <property type="term" value="F:ephrin receptor activity"/>
    <property type="evidence" value="ECO:0000250"/>
    <property type="project" value="UniProtKB"/>
</dbReference>
<dbReference type="GO" id="GO:0005005">
    <property type="term" value="F:transmembrane-ephrin receptor activity"/>
    <property type="evidence" value="ECO:0000318"/>
    <property type="project" value="GO_Central"/>
</dbReference>
<dbReference type="GO" id="GO:0007411">
    <property type="term" value="P:axon guidance"/>
    <property type="evidence" value="ECO:0000250"/>
    <property type="project" value="UniProtKB"/>
</dbReference>
<dbReference type="GO" id="GO:0007413">
    <property type="term" value="P:axonal fasciculation"/>
    <property type="evidence" value="ECO:0000250"/>
    <property type="project" value="UniProtKB"/>
</dbReference>
<dbReference type="GO" id="GO:0016477">
    <property type="term" value="P:cell migration"/>
    <property type="evidence" value="ECO:0000250"/>
    <property type="project" value="UniProtKB"/>
</dbReference>
<dbReference type="GO" id="GO:0060996">
    <property type="term" value="P:dendritic spine development"/>
    <property type="evidence" value="ECO:0000250"/>
    <property type="project" value="UniProtKB"/>
</dbReference>
<dbReference type="GO" id="GO:0060997">
    <property type="term" value="P:dendritic spine morphogenesis"/>
    <property type="evidence" value="ECO:0000250"/>
    <property type="project" value="UniProtKB"/>
</dbReference>
<dbReference type="GO" id="GO:0048013">
    <property type="term" value="P:ephrin receptor signaling pathway"/>
    <property type="evidence" value="ECO:0000250"/>
    <property type="project" value="UniProtKB"/>
</dbReference>
<dbReference type="GO" id="GO:0051965">
    <property type="term" value="P:positive regulation of synapse assembly"/>
    <property type="evidence" value="ECO:0000250"/>
    <property type="project" value="UniProtKB"/>
</dbReference>
<dbReference type="GO" id="GO:0046777">
    <property type="term" value="P:protein autophosphorylation"/>
    <property type="evidence" value="ECO:0000250"/>
    <property type="project" value="UniProtKB"/>
</dbReference>
<dbReference type="GO" id="GO:0050770">
    <property type="term" value="P:regulation of axonogenesis"/>
    <property type="evidence" value="ECO:0000250"/>
    <property type="project" value="UniProtKB"/>
</dbReference>
<dbReference type="GO" id="GO:0022407">
    <property type="term" value="P:regulation of cell-cell adhesion"/>
    <property type="evidence" value="ECO:0000250"/>
    <property type="project" value="UniProtKB"/>
</dbReference>
<dbReference type="GO" id="GO:0043087">
    <property type="term" value="P:regulation of GTPase activity"/>
    <property type="evidence" value="ECO:0000250"/>
    <property type="project" value="UniProtKB"/>
</dbReference>
<dbReference type="GO" id="GO:0034446">
    <property type="term" value="P:substrate adhesion-dependent cell spreading"/>
    <property type="evidence" value="ECO:0000250"/>
    <property type="project" value="UniProtKB"/>
</dbReference>
<dbReference type="CDD" id="cd00063">
    <property type="entry name" value="FN3"/>
    <property type="match status" value="2"/>
</dbReference>
<dbReference type="CDD" id="cd05065">
    <property type="entry name" value="PTKc_EphR_B"/>
    <property type="match status" value="1"/>
</dbReference>
<dbReference type="CDD" id="cd09553">
    <property type="entry name" value="SAM_EPH-B3"/>
    <property type="match status" value="1"/>
</dbReference>
<dbReference type="CDD" id="cd00185">
    <property type="entry name" value="TNFRSF"/>
    <property type="match status" value="1"/>
</dbReference>
<dbReference type="FunFam" id="2.60.40.10:FF:000041">
    <property type="entry name" value="ephrin type-A receptor 3"/>
    <property type="match status" value="1"/>
</dbReference>
<dbReference type="FunFam" id="1.10.150.50:FF:000001">
    <property type="entry name" value="Ephrin type-A receptor 5"/>
    <property type="match status" value="1"/>
</dbReference>
<dbReference type="FunFam" id="2.10.50.10:FF:000001">
    <property type="entry name" value="Ephrin type-A receptor 5"/>
    <property type="match status" value="1"/>
</dbReference>
<dbReference type="FunFam" id="2.60.40.1770:FF:000001">
    <property type="entry name" value="Ephrin type-A receptor 5"/>
    <property type="match status" value="1"/>
</dbReference>
<dbReference type="FunFam" id="3.30.200.20:FF:000001">
    <property type="entry name" value="Ephrin type-A receptor 5"/>
    <property type="match status" value="1"/>
</dbReference>
<dbReference type="FunFam" id="1.10.510.10:FF:000015">
    <property type="entry name" value="Ephrin type-B receptor 2"/>
    <property type="match status" value="1"/>
</dbReference>
<dbReference type="FunFam" id="2.60.120.260:FF:000004">
    <property type="entry name" value="Ephrin type-B receptor 2"/>
    <property type="match status" value="1"/>
</dbReference>
<dbReference type="Gene3D" id="2.60.40.1770">
    <property type="entry name" value="ephrin a2 ectodomain"/>
    <property type="match status" value="1"/>
</dbReference>
<dbReference type="Gene3D" id="2.60.120.260">
    <property type="entry name" value="Galactose-binding domain-like"/>
    <property type="match status" value="1"/>
</dbReference>
<dbReference type="Gene3D" id="2.60.40.10">
    <property type="entry name" value="Immunoglobulins"/>
    <property type="match status" value="2"/>
</dbReference>
<dbReference type="Gene3D" id="3.30.200.20">
    <property type="entry name" value="Phosphorylase Kinase, domain 1"/>
    <property type="match status" value="1"/>
</dbReference>
<dbReference type="Gene3D" id="1.10.150.50">
    <property type="entry name" value="Transcription Factor, Ets-1"/>
    <property type="match status" value="1"/>
</dbReference>
<dbReference type="Gene3D" id="1.10.510.10">
    <property type="entry name" value="Transferase(Phosphotransferase) domain 1"/>
    <property type="match status" value="1"/>
</dbReference>
<dbReference type="Gene3D" id="2.10.50.10">
    <property type="entry name" value="Tumor Necrosis Factor Receptor, subunit A, domain 2"/>
    <property type="match status" value="1"/>
</dbReference>
<dbReference type="InterPro" id="IPR027936">
    <property type="entry name" value="Eph_TM"/>
</dbReference>
<dbReference type="InterPro" id="IPR001090">
    <property type="entry name" value="Ephrin_rcpt_lig-bd_dom"/>
</dbReference>
<dbReference type="InterPro" id="IPR050449">
    <property type="entry name" value="Ephrin_rcpt_TKs"/>
</dbReference>
<dbReference type="InterPro" id="IPR003961">
    <property type="entry name" value="FN3_dom"/>
</dbReference>
<dbReference type="InterPro" id="IPR036116">
    <property type="entry name" value="FN3_sf"/>
</dbReference>
<dbReference type="InterPro" id="IPR008979">
    <property type="entry name" value="Galactose-bd-like_sf"/>
</dbReference>
<dbReference type="InterPro" id="IPR009030">
    <property type="entry name" value="Growth_fac_rcpt_cys_sf"/>
</dbReference>
<dbReference type="InterPro" id="IPR013783">
    <property type="entry name" value="Ig-like_fold"/>
</dbReference>
<dbReference type="InterPro" id="IPR011009">
    <property type="entry name" value="Kinase-like_dom_sf"/>
</dbReference>
<dbReference type="InterPro" id="IPR000719">
    <property type="entry name" value="Prot_kinase_dom"/>
</dbReference>
<dbReference type="InterPro" id="IPR017441">
    <property type="entry name" value="Protein_kinase_ATP_BS"/>
</dbReference>
<dbReference type="InterPro" id="IPR001660">
    <property type="entry name" value="SAM"/>
</dbReference>
<dbReference type="InterPro" id="IPR013761">
    <property type="entry name" value="SAM/pointed_sf"/>
</dbReference>
<dbReference type="InterPro" id="IPR001245">
    <property type="entry name" value="Ser-Thr/Tyr_kinase_cat_dom"/>
</dbReference>
<dbReference type="InterPro" id="IPR011641">
    <property type="entry name" value="Tyr-kin_ephrin_A/B_rcpt-like"/>
</dbReference>
<dbReference type="InterPro" id="IPR008266">
    <property type="entry name" value="Tyr_kinase_AS"/>
</dbReference>
<dbReference type="InterPro" id="IPR020635">
    <property type="entry name" value="Tyr_kinase_cat_dom"/>
</dbReference>
<dbReference type="InterPro" id="IPR016257">
    <property type="entry name" value="Tyr_kinase_ephrin_rcpt"/>
</dbReference>
<dbReference type="InterPro" id="IPR001426">
    <property type="entry name" value="Tyr_kinase_rcpt_V_CS"/>
</dbReference>
<dbReference type="PANTHER" id="PTHR46877">
    <property type="entry name" value="EPH RECEPTOR A5"/>
    <property type="match status" value="1"/>
</dbReference>
<dbReference type="PANTHER" id="PTHR46877:SF6">
    <property type="entry name" value="EPHRIN TYPE-B RECEPTOR 3"/>
    <property type="match status" value="1"/>
</dbReference>
<dbReference type="Pfam" id="PF14575">
    <property type="entry name" value="EphA2_TM"/>
    <property type="match status" value="1"/>
</dbReference>
<dbReference type="Pfam" id="PF01404">
    <property type="entry name" value="Ephrin_lbd"/>
    <property type="match status" value="1"/>
</dbReference>
<dbReference type="Pfam" id="PF07699">
    <property type="entry name" value="Ephrin_rec_like"/>
    <property type="match status" value="1"/>
</dbReference>
<dbReference type="Pfam" id="PF00041">
    <property type="entry name" value="fn3"/>
    <property type="match status" value="2"/>
</dbReference>
<dbReference type="Pfam" id="PF07714">
    <property type="entry name" value="PK_Tyr_Ser-Thr"/>
    <property type="match status" value="1"/>
</dbReference>
<dbReference type="Pfam" id="PF07647">
    <property type="entry name" value="SAM_2"/>
    <property type="match status" value="1"/>
</dbReference>
<dbReference type="PIRSF" id="PIRSF000666">
    <property type="entry name" value="TyrPK_ephrin_receptor"/>
    <property type="match status" value="1"/>
</dbReference>
<dbReference type="PRINTS" id="PR00014">
    <property type="entry name" value="FNTYPEIII"/>
</dbReference>
<dbReference type="PRINTS" id="PR00109">
    <property type="entry name" value="TYRKINASE"/>
</dbReference>
<dbReference type="SMART" id="SM00615">
    <property type="entry name" value="EPH_lbd"/>
    <property type="match status" value="1"/>
</dbReference>
<dbReference type="SMART" id="SM01411">
    <property type="entry name" value="Ephrin_rec_like"/>
    <property type="match status" value="1"/>
</dbReference>
<dbReference type="SMART" id="SM00060">
    <property type="entry name" value="FN3"/>
    <property type="match status" value="2"/>
</dbReference>
<dbReference type="SMART" id="SM00454">
    <property type="entry name" value="SAM"/>
    <property type="match status" value="1"/>
</dbReference>
<dbReference type="SMART" id="SM00219">
    <property type="entry name" value="TyrKc"/>
    <property type="match status" value="1"/>
</dbReference>
<dbReference type="SUPFAM" id="SSF49265">
    <property type="entry name" value="Fibronectin type III"/>
    <property type="match status" value="1"/>
</dbReference>
<dbReference type="SUPFAM" id="SSF49785">
    <property type="entry name" value="Galactose-binding domain-like"/>
    <property type="match status" value="1"/>
</dbReference>
<dbReference type="SUPFAM" id="SSF57184">
    <property type="entry name" value="Growth factor receptor domain"/>
    <property type="match status" value="1"/>
</dbReference>
<dbReference type="SUPFAM" id="SSF56112">
    <property type="entry name" value="Protein kinase-like (PK-like)"/>
    <property type="match status" value="1"/>
</dbReference>
<dbReference type="SUPFAM" id="SSF47769">
    <property type="entry name" value="SAM/Pointed domain"/>
    <property type="match status" value="1"/>
</dbReference>
<dbReference type="PROSITE" id="PS51550">
    <property type="entry name" value="EPH_LBD"/>
    <property type="match status" value="1"/>
</dbReference>
<dbReference type="PROSITE" id="PS50853">
    <property type="entry name" value="FN3"/>
    <property type="match status" value="2"/>
</dbReference>
<dbReference type="PROSITE" id="PS00107">
    <property type="entry name" value="PROTEIN_KINASE_ATP"/>
    <property type="match status" value="1"/>
</dbReference>
<dbReference type="PROSITE" id="PS50011">
    <property type="entry name" value="PROTEIN_KINASE_DOM"/>
    <property type="match status" value="1"/>
</dbReference>
<dbReference type="PROSITE" id="PS00109">
    <property type="entry name" value="PROTEIN_KINASE_TYR"/>
    <property type="match status" value="1"/>
</dbReference>
<dbReference type="PROSITE" id="PS00790">
    <property type="entry name" value="RECEPTOR_TYR_KIN_V_1"/>
    <property type="match status" value="1"/>
</dbReference>
<dbReference type="PROSITE" id="PS00791">
    <property type="entry name" value="RECEPTOR_TYR_KIN_V_2"/>
    <property type="match status" value="1"/>
</dbReference>
<dbReference type="PROSITE" id="PS50105">
    <property type="entry name" value="SAM_DOMAIN"/>
    <property type="match status" value="1"/>
</dbReference>
<gene>
    <name type="primary">ephb3</name>
    <name type="synonym">tck</name>
</gene>
<name>EPHB3_XENLA</name>
<evidence type="ECO:0000250" key="1"/>
<evidence type="ECO:0000255" key="2"/>
<evidence type="ECO:0000255" key="3">
    <source>
        <dbReference type="PROSITE-ProRule" id="PRU00159"/>
    </source>
</evidence>
<evidence type="ECO:0000255" key="4">
    <source>
        <dbReference type="PROSITE-ProRule" id="PRU00184"/>
    </source>
</evidence>
<evidence type="ECO:0000255" key="5">
    <source>
        <dbReference type="PROSITE-ProRule" id="PRU00316"/>
    </source>
</evidence>
<evidence type="ECO:0000255" key="6">
    <source>
        <dbReference type="PROSITE-ProRule" id="PRU00883"/>
    </source>
</evidence>
<evidence type="ECO:0000255" key="7">
    <source>
        <dbReference type="PROSITE-ProRule" id="PRU10028"/>
    </source>
</evidence>
<reference key="1">
    <citation type="journal article" date="1995" name="Oncogene">
        <title>Novel members of the eph receptor tyrosine kinase subfamily expressed during Xenopus development.</title>
        <authorList>
            <person name="Scales J.B."/>
            <person name="Winning R.S."/>
            <person name="Renaud C.S."/>
            <person name="Shea L.J."/>
            <person name="Sargent T.D."/>
        </authorList>
    </citation>
    <scope>NUCLEOTIDE SEQUENCE [MRNA]</scope>
</reference>
<protein>
    <recommendedName>
        <fullName>Ephrin type-B receptor 3</fullName>
        <ecNumber>2.7.10.1</ecNumber>
    </recommendedName>
    <alternativeName>
        <fullName>Tyrosine-protein kinase receptor TCK</fullName>
    </alternativeName>
</protein>
<feature type="signal peptide" evidence="2">
    <location>
        <begin position="1"/>
        <end position="16"/>
    </location>
</feature>
<feature type="chain" id="PRO_0000016833" description="Ephrin type-B receptor 3">
    <location>
        <begin position="17"/>
        <end position="974"/>
    </location>
</feature>
<feature type="topological domain" description="Extracellular" evidence="2">
    <location>
        <begin position="17"/>
        <end position="534"/>
    </location>
</feature>
<feature type="transmembrane region" description="Helical" evidence="2">
    <location>
        <begin position="535"/>
        <end position="555"/>
    </location>
</feature>
<feature type="topological domain" description="Cytoplasmic" evidence="2">
    <location>
        <begin position="556"/>
        <end position="974"/>
    </location>
</feature>
<feature type="domain" description="Eph LBD" evidence="6">
    <location>
        <begin position="18"/>
        <end position="196"/>
    </location>
</feature>
<feature type="domain" description="Fibronectin type-III 1" evidence="5">
    <location>
        <begin position="318"/>
        <end position="426"/>
    </location>
</feature>
<feature type="domain" description="Fibronectin type-III 2" evidence="5">
    <location>
        <begin position="427"/>
        <end position="522"/>
    </location>
</feature>
<feature type="domain" description="Protein kinase" evidence="3">
    <location>
        <begin position="609"/>
        <end position="872"/>
    </location>
</feature>
<feature type="domain" description="SAM" evidence="4">
    <location>
        <begin position="901"/>
        <end position="965"/>
    </location>
</feature>
<feature type="short sequence motif" description="PDZ-binding" evidence="2">
    <location>
        <begin position="972"/>
        <end position="974"/>
    </location>
</feature>
<feature type="active site" description="Proton acceptor" evidence="3 7">
    <location>
        <position position="734"/>
    </location>
</feature>
<feature type="binding site" evidence="3">
    <location>
        <begin position="615"/>
        <end position="623"/>
    </location>
    <ligand>
        <name>ATP</name>
        <dbReference type="ChEBI" id="CHEBI:30616"/>
    </ligand>
</feature>
<feature type="binding site" evidence="3">
    <location>
        <position position="641"/>
    </location>
    <ligand>
        <name>ATP</name>
        <dbReference type="ChEBI" id="CHEBI:30616"/>
    </ligand>
</feature>
<feature type="modified residue" description="Phosphotyrosine; by autocatalysis" evidence="1">
    <location>
        <position position="590"/>
    </location>
</feature>
<feature type="glycosylation site" description="N-linked (GlcNAc...) asparagine" evidence="2">
    <location>
        <position position="330"/>
    </location>
</feature>
<feature type="glycosylation site" description="N-linked (GlcNAc...) asparagine" evidence="2">
    <location>
        <position position="420"/>
    </location>
</feature>
<feature type="disulfide bond" evidence="1">
    <location>
        <begin position="60"/>
        <end position="178"/>
    </location>
</feature>
<proteinExistence type="evidence at transcript level"/>